<organismHost>
    <name type="scientific">Cynomys gunnisoni</name>
    <name type="common">Gunnison's prairie dog</name>
    <name type="synonym">Spermophilus gunnisoni</name>
    <dbReference type="NCBI Taxonomy" id="45479"/>
</organismHost>
<organismHost>
    <name type="scientific">Cynomys leucurus</name>
    <name type="common">White-tailed prairie dog</name>
    <dbReference type="NCBI Taxonomy" id="99825"/>
</organismHost>
<organismHost>
    <name type="scientific">Cynomys ludovicianus</name>
    <name type="common">Black-tailed prairie dog</name>
    <dbReference type="NCBI Taxonomy" id="45480"/>
</organismHost>
<organismHost>
    <name type="scientific">Cynomys mexicanus</name>
    <name type="common">Mexican prairie dog</name>
    <dbReference type="NCBI Taxonomy" id="99826"/>
</organismHost>
<organismHost>
    <name type="scientific">Cynomys parvidens</name>
    <name type="common">Utah prairie dog</name>
    <dbReference type="NCBI Taxonomy" id="99827"/>
</organismHost>
<organismHost>
    <name type="scientific">Gliridae</name>
    <name type="common">dormice</name>
    <dbReference type="NCBI Taxonomy" id="30650"/>
</organismHost>
<organismHost>
    <name type="scientific">Heliosciurus ruwenzorii</name>
    <name type="common">Ruwenzori sun squirrel</name>
    <dbReference type="NCBI Taxonomy" id="226685"/>
</organismHost>
<organismHost>
    <name type="scientific">Homo sapiens</name>
    <name type="common">Human</name>
    <dbReference type="NCBI Taxonomy" id="9606"/>
</organismHost>
<organismHost>
    <name type="scientific">Mus musculus</name>
    <name type="common">Mouse</name>
    <dbReference type="NCBI Taxonomy" id="10090"/>
</organismHost>
<keyword id="KW-0244">Early protein</keyword>
<keyword id="KW-1185">Reference proteome</keyword>
<evidence type="ECO:0000305" key="1"/>
<proteinExistence type="evidence at transcript level"/>
<feature type="chain" id="PRO_0000457591" description="Protein OPG165">
    <location>
        <begin position="1"/>
        <end position="268"/>
    </location>
</feature>
<accession>A0A7H0DND6</accession>
<comment type="induction">
    <text>Expressed in the early phase of the viral replicative cycle.</text>
</comment>
<comment type="similarity">
    <text evidence="1">Belongs to the orthopoxvirus OPG165 family.</text>
</comment>
<sequence length="268" mass="30541">MHYTNMEIFPVFGISKISNFIANNDCRYYIDVEHQKIISDEINRQMDETVLLTNILSVEVVNDNEMYHLIPHRLSTIILCISSVGGCVISIDNDVNDKNILTFPIDHAVIISPLSKCVVVSKGPTTILVVKADIPSKRLVTSFTNDILYVNNLSLINYLPSSVFIIRRVTDYLDRHICDQIFANNKWYSIITIDDKQYPIPSNCIGMSSAKYINSSIEQDILIHVCNLEHPFDSVYKKMQSYNSLPIKEQILYGRIDNINMSISISVD</sequence>
<protein>
    <recommendedName>
        <fullName>Protein OPG165</fullName>
    </recommendedName>
</protein>
<organism>
    <name type="scientific">Monkeypox virus</name>
    <dbReference type="NCBI Taxonomy" id="10244"/>
    <lineage>
        <taxon>Viruses</taxon>
        <taxon>Varidnaviria</taxon>
        <taxon>Bamfordvirae</taxon>
        <taxon>Nucleocytoviricota</taxon>
        <taxon>Pokkesviricetes</taxon>
        <taxon>Chitovirales</taxon>
        <taxon>Poxviridae</taxon>
        <taxon>Chordopoxvirinae</taxon>
        <taxon>Orthopoxvirus</taxon>
    </lineage>
</organism>
<dbReference type="EMBL" id="MT903340">
    <property type="protein sequence ID" value="QNP13019.1"/>
    <property type="molecule type" value="Genomic_DNA"/>
</dbReference>
<dbReference type="RefSeq" id="YP_010377146.1">
    <property type="nucleotide sequence ID" value="NC_063383.1"/>
</dbReference>
<dbReference type="GeneID" id="72551559"/>
<dbReference type="Proteomes" id="UP000516359">
    <property type="component" value="Genome"/>
</dbReference>
<dbReference type="InterPro" id="IPR009641">
    <property type="entry name" value="Vaccinia_virus_A37"/>
</dbReference>
<dbReference type="Pfam" id="PF06822">
    <property type="entry name" value="DUF1235"/>
    <property type="match status" value="1"/>
</dbReference>
<gene>
    <name type="primary">OPG165</name>
    <name type="ORF">MPXVgp149</name>
</gene>
<reference key="1">
    <citation type="journal article" date="2022" name="J. Infect. Dis.">
        <title>Exportation of Monkeypox virus from the African continent.</title>
        <authorList>
            <person name="Mauldin M.R."/>
            <person name="McCollum A.M."/>
            <person name="Nakazawa Y.J."/>
            <person name="Mandra A."/>
            <person name="Whitehouse E.R."/>
            <person name="Davidson W."/>
            <person name="Zhao H."/>
            <person name="Gao J."/>
            <person name="Li Y."/>
            <person name="Doty J."/>
            <person name="Yinka-Ogunleye A."/>
            <person name="Akinpelu A."/>
            <person name="Aruna O."/>
            <person name="Naidoo D."/>
            <person name="Lewandowski K."/>
            <person name="Afrough B."/>
            <person name="Graham V."/>
            <person name="Aarons E."/>
            <person name="Hewson R."/>
            <person name="Vipond R."/>
            <person name="Dunning J."/>
            <person name="Chand M."/>
            <person name="Brown C."/>
            <person name="Cohen-Gihon I."/>
            <person name="Erez N."/>
            <person name="Shifman O."/>
            <person name="Israeli O."/>
            <person name="Sharon M."/>
            <person name="Schwartz E."/>
            <person name="Beth-Din A."/>
            <person name="Zvi A."/>
            <person name="Mak T.M."/>
            <person name="Ng Y.K."/>
            <person name="Cui L."/>
            <person name="Lin R.T.P."/>
            <person name="Olson V.A."/>
            <person name="Brooks T."/>
            <person name="Paran N."/>
            <person name="Ihekweazu C."/>
            <person name="Reynolds M.G."/>
        </authorList>
    </citation>
    <scope>NUCLEOTIDE SEQUENCE [LARGE SCALE GENOMIC DNA]</scope>
    <source>
        <strain>MPXV-M5312_HM12_Rivers</strain>
    </source>
</reference>
<name>PG165_MONPV</name>